<name>ARNT_SHIDS</name>
<feature type="chain" id="PRO_0000380038" description="Undecaprenyl phosphate-alpha-4-amino-4-deoxy-L-arabinose arabinosyl transferase">
    <location>
        <begin position="1"/>
        <end position="550"/>
    </location>
</feature>
<feature type="transmembrane region" description="Helical" evidence="1">
    <location>
        <begin position="7"/>
        <end position="27"/>
    </location>
</feature>
<feature type="transmembrane region" description="Helical" evidence="1">
    <location>
        <begin position="86"/>
        <end position="106"/>
    </location>
</feature>
<feature type="transmembrane region" description="Helical" evidence="1">
    <location>
        <begin position="111"/>
        <end position="133"/>
    </location>
</feature>
<feature type="transmembrane region" description="Helical" evidence="1">
    <location>
        <begin position="137"/>
        <end position="154"/>
    </location>
</feature>
<feature type="transmembrane region" description="Helical" evidence="1">
    <location>
        <begin position="165"/>
        <end position="185"/>
    </location>
</feature>
<feature type="transmembrane region" description="Helical" evidence="1">
    <location>
        <begin position="204"/>
        <end position="224"/>
    </location>
</feature>
<feature type="transmembrane region" description="Helical" evidence="1">
    <location>
        <begin position="255"/>
        <end position="275"/>
    </location>
</feature>
<feature type="transmembrane region" description="Helical" evidence="1">
    <location>
        <begin position="288"/>
        <end position="308"/>
    </location>
</feature>
<feature type="transmembrane region" description="Helical" evidence="1">
    <location>
        <begin position="315"/>
        <end position="335"/>
    </location>
</feature>
<feature type="transmembrane region" description="Helical" evidence="1">
    <location>
        <begin position="346"/>
        <end position="366"/>
    </location>
</feature>
<feature type="transmembrane region" description="Helical" evidence="1">
    <location>
        <begin position="382"/>
        <end position="402"/>
    </location>
</feature>
<feature type="transmembrane region" description="Helical" evidence="1">
    <location>
        <begin position="406"/>
        <end position="426"/>
    </location>
</feature>
<accession>Q32DT1</accession>
<gene>
    <name evidence="1" type="primary">arnT</name>
    <name type="ordered locus">SDY_2453</name>
</gene>
<proteinExistence type="inferred from homology"/>
<organism>
    <name type="scientific">Shigella dysenteriae serotype 1 (strain Sd197)</name>
    <dbReference type="NCBI Taxonomy" id="300267"/>
    <lineage>
        <taxon>Bacteria</taxon>
        <taxon>Pseudomonadati</taxon>
        <taxon>Pseudomonadota</taxon>
        <taxon>Gammaproteobacteria</taxon>
        <taxon>Enterobacterales</taxon>
        <taxon>Enterobacteriaceae</taxon>
        <taxon>Shigella</taxon>
    </lineage>
</organism>
<keyword id="KW-0997">Cell inner membrane</keyword>
<keyword id="KW-1003">Cell membrane</keyword>
<keyword id="KW-0328">Glycosyltransferase</keyword>
<keyword id="KW-0441">Lipid A biosynthesis</keyword>
<keyword id="KW-0444">Lipid biosynthesis</keyword>
<keyword id="KW-0443">Lipid metabolism</keyword>
<keyword id="KW-0448">Lipopolysaccharide biosynthesis</keyword>
<keyword id="KW-0472">Membrane</keyword>
<keyword id="KW-1185">Reference proteome</keyword>
<keyword id="KW-0808">Transferase</keyword>
<keyword id="KW-0812">Transmembrane</keyword>
<keyword id="KW-1133">Transmembrane helix</keyword>
<protein>
    <recommendedName>
        <fullName evidence="1">Undecaprenyl phosphate-alpha-4-amino-4-deoxy-L-arabinose arabinosyl transferase</fullName>
        <ecNumber evidence="1">2.4.2.43</ecNumber>
    </recommendedName>
    <alternativeName>
        <fullName evidence="1">4-amino-4-deoxy-L-arabinose lipid A transferase</fullName>
    </alternativeName>
    <alternativeName>
        <fullName evidence="1">Lipid IV(A) 4-amino-4-deoxy-L-arabinosyltransferase</fullName>
    </alternativeName>
    <alternativeName>
        <fullName evidence="1">Undecaprenyl phosphate-alpha-L-Ara4N transferase</fullName>
    </alternativeName>
</protein>
<comment type="function">
    <text evidence="1">Catalyzes the transfer of the L-Ara4N moiety of the glycolipid undecaprenyl phosphate-alpha-L-Ara4N to lipid A. The modified arabinose is attached to lipid A and is required for resistance to polymyxin and cationic antimicrobial peptides.</text>
</comment>
<comment type="catalytic activity">
    <reaction evidence="1">
        <text>4-amino-4-deoxy-alpha-L-arabinopyranosyl di-trans,octa-cis-undecaprenyl phosphate + lipid IVA = lipid IIA + di-trans,octa-cis-undecaprenyl phosphate.</text>
        <dbReference type="EC" id="2.4.2.43"/>
    </reaction>
</comment>
<comment type="pathway">
    <text evidence="1">Lipopolysaccharide metabolism; 4-amino-4-deoxy-beta-L-arabinose-lipid A biosynthesis.</text>
</comment>
<comment type="subcellular location">
    <subcellularLocation>
        <location evidence="1">Cell inner membrane</location>
        <topology evidence="1">Multi-pass membrane protein</topology>
    </subcellularLocation>
</comment>
<comment type="similarity">
    <text evidence="1">Belongs to the glycosyltransferase 83 family.</text>
</comment>
<dbReference type="EC" id="2.4.2.43" evidence="1"/>
<dbReference type="EMBL" id="CP000034">
    <property type="protein sequence ID" value="ABB62524.1"/>
    <property type="molecule type" value="Genomic_DNA"/>
</dbReference>
<dbReference type="RefSeq" id="WP_000844007.1">
    <property type="nucleotide sequence ID" value="NC_007606.1"/>
</dbReference>
<dbReference type="RefSeq" id="YP_404015.1">
    <property type="nucleotide sequence ID" value="NC_007606.1"/>
</dbReference>
<dbReference type="SMR" id="Q32DT1"/>
<dbReference type="STRING" id="300267.SDY_2453"/>
<dbReference type="CAZy" id="GT83">
    <property type="family name" value="Glycosyltransferase Family 83"/>
</dbReference>
<dbReference type="EnsemblBacteria" id="ABB62524">
    <property type="protein sequence ID" value="ABB62524"/>
    <property type="gene ID" value="SDY_2453"/>
</dbReference>
<dbReference type="KEGG" id="sdy:SDY_2453"/>
<dbReference type="PATRIC" id="fig|300267.13.peg.2959"/>
<dbReference type="HOGENOM" id="CLU_019200_2_1_6"/>
<dbReference type="UniPathway" id="UPA00037"/>
<dbReference type="Proteomes" id="UP000002716">
    <property type="component" value="Chromosome"/>
</dbReference>
<dbReference type="GO" id="GO:0005886">
    <property type="term" value="C:plasma membrane"/>
    <property type="evidence" value="ECO:0007669"/>
    <property type="project" value="UniProtKB-SubCell"/>
</dbReference>
<dbReference type="GO" id="GO:0103015">
    <property type="term" value="F:4-amino-4-deoxy-L-arabinose transferase activity"/>
    <property type="evidence" value="ECO:0007669"/>
    <property type="project" value="UniProtKB-EC"/>
</dbReference>
<dbReference type="GO" id="GO:0000030">
    <property type="term" value="F:mannosyltransferase activity"/>
    <property type="evidence" value="ECO:0007669"/>
    <property type="project" value="InterPro"/>
</dbReference>
<dbReference type="GO" id="GO:0009245">
    <property type="term" value="P:lipid A biosynthetic process"/>
    <property type="evidence" value="ECO:0007669"/>
    <property type="project" value="UniProtKB-UniRule"/>
</dbReference>
<dbReference type="GO" id="GO:0009103">
    <property type="term" value="P:lipopolysaccharide biosynthetic process"/>
    <property type="evidence" value="ECO:0007669"/>
    <property type="project" value="UniProtKB-KW"/>
</dbReference>
<dbReference type="GO" id="GO:0006493">
    <property type="term" value="P:protein O-linked glycosylation"/>
    <property type="evidence" value="ECO:0007669"/>
    <property type="project" value="InterPro"/>
</dbReference>
<dbReference type="GO" id="GO:0010041">
    <property type="term" value="P:response to iron(III) ion"/>
    <property type="evidence" value="ECO:0007669"/>
    <property type="project" value="TreeGrafter"/>
</dbReference>
<dbReference type="HAMAP" id="MF_01165">
    <property type="entry name" value="ArnT_transfer"/>
    <property type="match status" value="1"/>
</dbReference>
<dbReference type="InterPro" id="IPR022839">
    <property type="entry name" value="ArnT_tfrase"/>
</dbReference>
<dbReference type="InterPro" id="IPR003342">
    <property type="entry name" value="Glyco_trans_39/83"/>
</dbReference>
<dbReference type="InterPro" id="IPR050297">
    <property type="entry name" value="LipidA_mod_glycosyltrf_83"/>
</dbReference>
<dbReference type="NCBIfam" id="NF009784">
    <property type="entry name" value="PRK13279.1"/>
    <property type="match status" value="1"/>
</dbReference>
<dbReference type="PANTHER" id="PTHR33908">
    <property type="entry name" value="MANNOSYLTRANSFERASE YKCB-RELATED"/>
    <property type="match status" value="1"/>
</dbReference>
<dbReference type="PANTHER" id="PTHR33908:SF3">
    <property type="entry name" value="UNDECAPRENYL PHOSPHATE-ALPHA-4-AMINO-4-DEOXY-L-ARABINOSE ARABINOSYL TRANSFERASE"/>
    <property type="match status" value="1"/>
</dbReference>
<dbReference type="Pfam" id="PF02366">
    <property type="entry name" value="PMT"/>
    <property type="match status" value="1"/>
</dbReference>
<evidence type="ECO:0000255" key="1">
    <source>
        <dbReference type="HAMAP-Rule" id="MF_01165"/>
    </source>
</evidence>
<sequence length="550" mass="62608">MKSVRYLIGLFAFIACYYLLPISTRLLWQPDETRYAEISREMLASGDWIVPHLLGLRYFEKPIAGYWINSIGQWLFGANNFDVRAGVIFAPLLTAALVTWFTLRLWRDKRLALLATVIYLSLFIVYAIGTYAVLDPFIAFWLVAGMCSFWLAMQAQTWKGKSAGFLLLGITCGMGVMTKGFLALAVPVLSVLPWVATQKRWKDLFIYGWLAVISCVLTVLPWGLAIVQREPDFWHYFFWVEHIQRFALDDAQHRAPFWYYVPVIIAGSLPWLGLLPGALYTGWKNRKHSATVYLLSWTIMPLLFFSVAKGKLPTYILSCFAPLAMLLAHYALLAAKNNPLALRINGWINIAFGVTGIIATFVVSPWGPMNTPVWQTFESYKVFCAWSIFSLWAFFGWYTLTNVEKTWSFAALCPLGLALLVGFSIPDRVMEGKHPQFFVEMTQESLQPSRYILTDSVGVAAGLAWSLQRDDIIMYRQTGELKYGLNYPDAKGRFVSGDEFANWLNQHRQEGIITLVLSVDRDEDINSLAIPPADAIDRQERLVLIQYRPK</sequence>
<reference key="1">
    <citation type="journal article" date="2005" name="Nucleic Acids Res.">
        <title>Genome dynamics and diversity of Shigella species, the etiologic agents of bacillary dysentery.</title>
        <authorList>
            <person name="Yang F."/>
            <person name="Yang J."/>
            <person name="Zhang X."/>
            <person name="Chen L."/>
            <person name="Jiang Y."/>
            <person name="Yan Y."/>
            <person name="Tang X."/>
            <person name="Wang J."/>
            <person name="Xiong Z."/>
            <person name="Dong J."/>
            <person name="Xue Y."/>
            <person name="Zhu Y."/>
            <person name="Xu X."/>
            <person name="Sun L."/>
            <person name="Chen S."/>
            <person name="Nie H."/>
            <person name="Peng J."/>
            <person name="Xu J."/>
            <person name="Wang Y."/>
            <person name="Yuan Z."/>
            <person name="Wen Y."/>
            <person name="Yao Z."/>
            <person name="Shen Y."/>
            <person name="Qiang B."/>
            <person name="Hou Y."/>
            <person name="Yu J."/>
            <person name="Jin Q."/>
        </authorList>
    </citation>
    <scope>NUCLEOTIDE SEQUENCE [LARGE SCALE GENOMIC DNA]</scope>
    <source>
        <strain>Sd197</strain>
    </source>
</reference>